<comment type="function">
    <text evidence="3 5">Aerial growth, conidiation, and dispersal of filamentous fungi in the environment rely upon a capability of their secreting small amphipathic proteins called hydrophobins (HPBs) with low sequence identity. Class I can self-assemble into an outermost layer of rodlet bundles on aerial cell surfaces, conferring cellular hydrophobicity that supports fungal growth, development and dispersal; whereas Class II form highly ordered films at water-air interfaces through intermolecular interactions but contribute nothing to the rodlet structure (Probable). Hum2 is a class I hydrophobin which that plays a role in, but seems not to be crucial for the formation of aerial hyphae (PubMed:17159213). Hydrophobins of Mycosarcoma maydis have been functionally replaced, at least partially, by repellents (PubMed:17159213).</text>
</comment>
<comment type="subunit">
    <text evidence="1">Self-assembles to form functional amyloid fibrils called rodlets. Self-assembly into fibrillar rodlets occurs spontaneously at hydrophobic:hydrophilic interfaces and the rodlets further associate laterally to form amphipathic monolayers.</text>
</comment>
<comment type="subcellular location">
    <subcellularLocation>
        <location evidence="6">Secreted</location>
    </subcellularLocation>
    <subcellularLocation>
        <location evidence="6">Secreted</location>
        <location evidence="6">Cell wall</location>
    </subcellularLocation>
</comment>
<comment type="disruption phenotype">
    <text evidence="3">Reduces the formation of aerial hyphae (PubMed:17159213). Does not affect surface hydrophobicity (PubMed:17159213).</text>
</comment>
<comment type="miscellaneous">
    <text evidence="3">Filamentous ascomycetes and basidiomycetes generally contain multiple hydrophobin genes. In contrast, hydrophobin genes are absent in the genomes of the yeasts Cryptococcus neoformans, Saccharomyces cerevisiae, Schizosaccharomyces pombe, Kluyveromyces lactis and Yarrowia lipolytica, and the dimorphic fungus Candida albicans. These organisms have probably lost their hydrophobin genes during evolution. Mycosarcoma maydis does have hydrophobin genes but the encoded proteins have been functionally replaced, at least partially, by the repellents. Mycosarcoma maydis thus seems to be in between the filamentous fungi and the yeasts with respect to the role of hydrophobins in the life cycle.</text>
</comment>
<comment type="similarity">
    <text evidence="5">Belongs to the fungal hydrophobin family.</text>
</comment>
<reference key="1">
    <citation type="journal article" date="2006" name="Nature">
        <title>Insights from the genome of the biotrophic fungal plant pathogen Ustilago maydis.</title>
        <authorList>
            <person name="Kaemper J."/>
            <person name="Kahmann R."/>
            <person name="Boelker M."/>
            <person name="Ma L.-J."/>
            <person name="Brefort T."/>
            <person name="Saville B.J."/>
            <person name="Banuett F."/>
            <person name="Kronstad J.W."/>
            <person name="Gold S.E."/>
            <person name="Mueller O."/>
            <person name="Perlin M.H."/>
            <person name="Woesten H.A.B."/>
            <person name="de Vries R."/>
            <person name="Ruiz-Herrera J."/>
            <person name="Reynaga-Pena C.G."/>
            <person name="Snetselaar K."/>
            <person name="McCann M."/>
            <person name="Perez-Martin J."/>
            <person name="Feldbruegge M."/>
            <person name="Basse C.W."/>
            <person name="Steinberg G."/>
            <person name="Ibeas J.I."/>
            <person name="Holloman W."/>
            <person name="Guzman P."/>
            <person name="Farman M.L."/>
            <person name="Stajich J.E."/>
            <person name="Sentandreu R."/>
            <person name="Gonzalez-Prieto J.M."/>
            <person name="Kennell J.C."/>
            <person name="Molina L."/>
            <person name="Schirawski J."/>
            <person name="Mendoza-Mendoza A."/>
            <person name="Greilinger D."/>
            <person name="Muench K."/>
            <person name="Roessel N."/>
            <person name="Scherer M."/>
            <person name="Vranes M."/>
            <person name="Ladendorf O."/>
            <person name="Vincon V."/>
            <person name="Fuchs U."/>
            <person name="Sandrock B."/>
            <person name="Meng S."/>
            <person name="Ho E.C.H."/>
            <person name="Cahill M.J."/>
            <person name="Boyce K.J."/>
            <person name="Klose J."/>
            <person name="Klosterman S.J."/>
            <person name="Deelstra H.J."/>
            <person name="Ortiz-Castellanos L."/>
            <person name="Li W."/>
            <person name="Sanchez-Alonso P."/>
            <person name="Schreier P.H."/>
            <person name="Haeuser-Hahn I."/>
            <person name="Vaupel M."/>
            <person name="Koopmann E."/>
            <person name="Friedrich G."/>
            <person name="Voss H."/>
            <person name="Schlueter T."/>
            <person name="Margolis J."/>
            <person name="Platt D."/>
            <person name="Swimmer C."/>
            <person name="Gnirke A."/>
            <person name="Chen F."/>
            <person name="Vysotskaia V."/>
            <person name="Mannhaupt G."/>
            <person name="Gueldener U."/>
            <person name="Muensterkoetter M."/>
            <person name="Haase D."/>
            <person name="Oesterheld M."/>
            <person name="Mewes H.-W."/>
            <person name="Mauceli E.W."/>
            <person name="DeCaprio D."/>
            <person name="Wade C.M."/>
            <person name="Butler J."/>
            <person name="Young S.K."/>
            <person name="Jaffe D.B."/>
            <person name="Calvo S.E."/>
            <person name="Nusbaum C."/>
            <person name="Galagan J.E."/>
            <person name="Birren B.W."/>
        </authorList>
    </citation>
    <scope>NUCLEOTIDE SEQUENCE [LARGE SCALE GENOMIC DNA]</scope>
    <source>
        <strain>DSM 14603 / FGSC 9021 / UM521</strain>
    </source>
</reference>
<reference key="2">
    <citation type="submission" date="2014-09" db="EMBL/GenBank/DDBJ databases">
        <authorList>
            <person name="Gueldener U."/>
            <person name="Muensterkoetter M."/>
            <person name="Walter M.C."/>
            <person name="Mannhaupt G."/>
            <person name="Kahmann R."/>
        </authorList>
    </citation>
    <scope>GENOME REANNOTATION</scope>
    <source>
        <strain>DSM 14603 / FGSC 9021 / UM521</strain>
    </source>
</reference>
<reference key="3">
    <citation type="journal article" date="2006" name="Microbiology">
        <title>Repellents have functionally replaced hydrophobins in mediating attachment to a hydrophobic surface and in formation of hydrophobic aerial hyphae in Ustilago maydis.</title>
        <authorList>
            <person name="Teertstra W.R."/>
            <person name="Deelstra H.J."/>
            <person name="Vranes M."/>
            <person name="Bohlmann R."/>
            <person name="Kahmann R."/>
            <person name="Kaemper J."/>
            <person name="Woesten H.A.B."/>
        </authorList>
    </citation>
    <scope>FUNCTION</scope>
    <scope>DISRUPTION PHENOTYPE</scope>
</reference>
<organism>
    <name type="scientific">Mycosarcoma maydis</name>
    <name type="common">Corn smut fungus</name>
    <name type="synonym">Ustilago maydis</name>
    <dbReference type="NCBI Taxonomy" id="5270"/>
    <lineage>
        <taxon>Eukaryota</taxon>
        <taxon>Fungi</taxon>
        <taxon>Dikarya</taxon>
        <taxon>Basidiomycota</taxon>
        <taxon>Ustilaginomycotina</taxon>
        <taxon>Ustilaginomycetes</taxon>
        <taxon>Ustilaginales</taxon>
        <taxon>Ustilaginaceae</taxon>
        <taxon>Mycosarcoma</taxon>
    </lineage>
</organism>
<feature type="signal peptide" evidence="2">
    <location>
        <begin position="1"/>
        <end position="19"/>
    </location>
</feature>
<feature type="chain" id="PRO_5013987708" description="Class I hydrophobin hum2">
    <location>
        <begin position="20"/>
        <end position="118"/>
    </location>
</feature>
<feature type="disulfide bond" evidence="1">
    <location>
        <begin position="33"/>
        <end position="98"/>
    </location>
</feature>
<feature type="disulfide bond" evidence="1">
    <location>
        <begin position="40"/>
        <end position="92"/>
    </location>
</feature>
<feature type="disulfide bond" evidence="1">
    <location>
        <begin position="41"/>
        <end position="74"/>
    </location>
</feature>
<feature type="disulfide bond" evidence="1">
    <location>
        <begin position="99"/>
        <end position="112"/>
    </location>
</feature>
<accession>A0A0D1BZL3</accession>
<evidence type="ECO:0000250" key="1">
    <source>
        <dbReference type="UniProtKB" id="Q04571"/>
    </source>
</evidence>
<evidence type="ECO:0000255" key="2"/>
<evidence type="ECO:0000269" key="3">
    <source>
    </source>
</evidence>
<evidence type="ECO:0000303" key="4">
    <source>
    </source>
</evidence>
<evidence type="ECO:0000305" key="5"/>
<evidence type="ECO:0000305" key="6">
    <source>
    </source>
</evidence>
<name>HUM2_MYCMD</name>
<sequence length="118" mass="11807">MQFKTIFATLAAFAAVASALPTSSSEQNGNGQCAVGQAQCCSQVQKQGKDASDALAGLGLAFNQILDGAIGLDCQQIPVGVLGGAIAIQNTCKNTAVCCQGSANNGLIQTSCTPLSIN</sequence>
<keyword id="KW-0134">Cell wall</keyword>
<keyword id="KW-1015">Disulfide bond</keyword>
<keyword id="KW-1185">Reference proteome</keyword>
<keyword id="KW-0964">Secreted</keyword>
<keyword id="KW-0732">Signal</keyword>
<protein>
    <recommendedName>
        <fullName evidence="4">Class I hydrophobin hum2</fullName>
    </recommendedName>
</protein>
<dbReference type="EMBL" id="CM003154">
    <property type="protein sequence ID" value="KIS67142.1"/>
    <property type="molecule type" value="Genomic_DNA"/>
</dbReference>
<dbReference type="RefSeq" id="XP_011391376.1">
    <property type="nucleotide sequence ID" value="XM_011393074.1"/>
</dbReference>
<dbReference type="STRING" id="237631.A0A0D1BZL3"/>
<dbReference type="EnsemblFungi" id="KIS67142">
    <property type="protein sequence ID" value="KIS67142"/>
    <property type="gene ID" value="UMAG_11562"/>
</dbReference>
<dbReference type="GeneID" id="23567429"/>
<dbReference type="KEGG" id="uma:UMAG_11562"/>
<dbReference type="VEuPathDB" id="FungiDB:UMAG_11562"/>
<dbReference type="InParanoid" id="A0A0D1BZL3"/>
<dbReference type="OrthoDB" id="4225815at2759"/>
<dbReference type="Proteomes" id="UP000000561">
    <property type="component" value="Chromosome 15"/>
</dbReference>
<dbReference type="GO" id="GO:0005576">
    <property type="term" value="C:extracellular region"/>
    <property type="evidence" value="ECO:0007669"/>
    <property type="project" value="UniProtKB-KW"/>
</dbReference>
<dbReference type="GO" id="GO:0009277">
    <property type="term" value="C:fungal-type cell wall"/>
    <property type="evidence" value="ECO:0007669"/>
    <property type="project" value="InterPro"/>
</dbReference>
<dbReference type="GO" id="GO:0005199">
    <property type="term" value="F:structural constituent of cell wall"/>
    <property type="evidence" value="ECO:0007669"/>
    <property type="project" value="InterPro"/>
</dbReference>
<dbReference type="CDD" id="cd23507">
    <property type="entry name" value="hydrophobin_I"/>
    <property type="match status" value="1"/>
</dbReference>
<dbReference type="InterPro" id="IPR001338">
    <property type="entry name" value="Hydrophobin"/>
</dbReference>
<dbReference type="Pfam" id="PF01185">
    <property type="entry name" value="Hydrophobin"/>
    <property type="match status" value="1"/>
</dbReference>
<dbReference type="SMART" id="SM00075">
    <property type="entry name" value="HYDRO"/>
    <property type="match status" value="1"/>
</dbReference>
<gene>
    <name evidence="4" type="primary">hum2</name>
    <name type="ORF">UMAG_11562</name>
</gene>
<proteinExistence type="inferred from homology"/>